<evidence type="ECO:0000255" key="1">
    <source>
        <dbReference type="HAMAP-Rule" id="MF_01363"/>
    </source>
</evidence>
<evidence type="ECO:0000305" key="2"/>
<name>RL21_SYNSC</name>
<gene>
    <name evidence="1" type="primary">rplU</name>
    <name evidence="1" type="synonym">rpl21</name>
    <name type="ordered locus">Syncc9605_2127</name>
</gene>
<keyword id="KW-0687">Ribonucleoprotein</keyword>
<keyword id="KW-0689">Ribosomal protein</keyword>
<keyword id="KW-0694">RNA-binding</keyword>
<keyword id="KW-0699">rRNA-binding</keyword>
<accession>Q3AHR6</accession>
<reference key="1">
    <citation type="submission" date="2005-07" db="EMBL/GenBank/DDBJ databases">
        <title>Complete sequence of Synechococcus sp. CC9605.</title>
        <authorList>
            <consortium name="US DOE Joint Genome Institute"/>
            <person name="Copeland A."/>
            <person name="Lucas S."/>
            <person name="Lapidus A."/>
            <person name="Barry K."/>
            <person name="Detter J.C."/>
            <person name="Glavina T."/>
            <person name="Hammon N."/>
            <person name="Israni S."/>
            <person name="Pitluck S."/>
            <person name="Schmutz J."/>
            <person name="Martinez M."/>
            <person name="Larimer F."/>
            <person name="Land M."/>
            <person name="Kyrpides N."/>
            <person name="Ivanova N."/>
            <person name="Richardson P."/>
        </authorList>
    </citation>
    <scope>NUCLEOTIDE SEQUENCE [LARGE SCALE GENOMIC DNA]</scope>
    <source>
        <strain>CC9605</strain>
    </source>
</reference>
<organism>
    <name type="scientific">Synechococcus sp. (strain CC9605)</name>
    <dbReference type="NCBI Taxonomy" id="110662"/>
    <lineage>
        <taxon>Bacteria</taxon>
        <taxon>Bacillati</taxon>
        <taxon>Cyanobacteriota</taxon>
        <taxon>Cyanophyceae</taxon>
        <taxon>Synechococcales</taxon>
        <taxon>Synechococcaceae</taxon>
        <taxon>Synechococcus</taxon>
    </lineage>
</organism>
<dbReference type="EMBL" id="CP000110">
    <property type="protein sequence ID" value="ABB35866.1"/>
    <property type="molecule type" value="Genomic_DNA"/>
</dbReference>
<dbReference type="RefSeq" id="WP_011365073.1">
    <property type="nucleotide sequence ID" value="NC_007516.1"/>
</dbReference>
<dbReference type="SMR" id="Q3AHR6"/>
<dbReference type="STRING" id="110662.Syncc9605_2127"/>
<dbReference type="KEGG" id="syd:Syncc9605_2127"/>
<dbReference type="eggNOG" id="COG0261">
    <property type="taxonomic scope" value="Bacteria"/>
</dbReference>
<dbReference type="HOGENOM" id="CLU_061463_6_0_3"/>
<dbReference type="OrthoDB" id="9813334at2"/>
<dbReference type="GO" id="GO:0005737">
    <property type="term" value="C:cytoplasm"/>
    <property type="evidence" value="ECO:0007669"/>
    <property type="project" value="UniProtKB-ARBA"/>
</dbReference>
<dbReference type="GO" id="GO:1990904">
    <property type="term" value="C:ribonucleoprotein complex"/>
    <property type="evidence" value="ECO:0007669"/>
    <property type="project" value="UniProtKB-KW"/>
</dbReference>
<dbReference type="GO" id="GO:0005840">
    <property type="term" value="C:ribosome"/>
    <property type="evidence" value="ECO:0007669"/>
    <property type="project" value="UniProtKB-KW"/>
</dbReference>
<dbReference type="GO" id="GO:0019843">
    <property type="term" value="F:rRNA binding"/>
    <property type="evidence" value="ECO:0007669"/>
    <property type="project" value="UniProtKB-UniRule"/>
</dbReference>
<dbReference type="GO" id="GO:0003735">
    <property type="term" value="F:structural constituent of ribosome"/>
    <property type="evidence" value="ECO:0007669"/>
    <property type="project" value="InterPro"/>
</dbReference>
<dbReference type="GO" id="GO:0006412">
    <property type="term" value="P:translation"/>
    <property type="evidence" value="ECO:0007669"/>
    <property type="project" value="UniProtKB-UniRule"/>
</dbReference>
<dbReference type="HAMAP" id="MF_01363">
    <property type="entry name" value="Ribosomal_bL21"/>
    <property type="match status" value="1"/>
</dbReference>
<dbReference type="InterPro" id="IPR028909">
    <property type="entry name" value="bL21-like"/>
</dbReference>
<dbReference type="InterPro" id="IPR036164">
    <property type="entry name" value="bL21-like_sf"/>
</dbReference>
<dbReference type="InterPro" id="IPR001787">
    <property type="entry name" value="Ribosomal_bL21"/>
</dbReference>
<dbReference type="InterPro" id="IPR018258">
    <property type="entry name" value="Ribosomal_bL21_CS"/>
</dbReference>
<dbReference type="NCBIfam" id="TIGR00061">
    <property type="entry name" value="L21"/>
    <property type="match status" value="1"/>
</dbReference>
<dbReference type="PANTHER" id="PTHR21349">
    <property type="entry name" value="50S RIBOSOMAL PROTEIN L21"/>
    <property type="match status" value="1"/>
</dbReference>
<dbReference type="PANTHER" id="PTHR21349:SF0">
    <property type="entry name" value="LARGE RIBOSOMAL SUBUNIT PROTEIN BL21M"/>
    <property type="match status" value="1"/>
</dbReference>
<dbReference type="Pfam" id="PF00829">
    <property type="entry name" value="Ribosomal_L21p"/>
    <property type="match status" value="1"/>
</dbReference>
<dbReference type="SUPFAM" id="SSF141091">
    <property type="entry name" value="L21p-like"/>
    <property type="match status" value="1"/>
</dbReference>
<dbReference type="PROSITE" id="PS01169">
    <property type="entry name" value="RIBOSOMAL_L21"/>
    <property type="match status" value="1"/>
</dbReference>
<protein>
    <recommendedName>
        <fullName evidence="1">Large ribosomal subunit protein bL21</fullName>
    </recommendedName>
    <alternativeName>
        <fullName evidence="2">50S ribosomal protein L21</fullName>
    </alternativeName>
</protein>
<comment type="function">
    <text evidence="1">This protein binds to 23S rRNA in the presence of protein L20.</text>
</comment>
<comment type="subunit">
    <text evidence="1">Part of the 50S ribosomal subunit. Contacts protein L20.</text>
</comment>
<comment type="similarity">
    <text evidence="1">Belongs to the bacterial ribosomal protein bL21 family.</text>
</comment>
<feature type="chain" id="PRO_0000269408" description="Large ribosomal subunit protein bL21">
    <location>
        <begin position="1"/>
        <end position="121"/>
    </location>
</feature>
<proteinExistence type="inferred from homology"/>
<sequence>MADTKPAAEQSGTYAIVEASGTQIWLQPNRYYDIDRLQAEVDDTIKLENVLLVKDGKGTTLGQPYVKDATVSLKVMAHRRGPKVIVYKMRPKKKTRRKNGHRQELTRVMVESISVGGKAIS</sequence>